<proteinExistence type="evidence at protein level"/>
<name>PRRP_HUMAN</name>
<comment type="function">
    <text>Stimulates prolactin (PRL) release and regulates the expression of prolactin through its receptor GPR10. May stimulate lactotrophs directly to secrete PRL.</text>
</comment>
<comment type="subcellular location">
    <subcellularLocation>
        <location>Secreted</location>
    </subcellularLocation>
</comment>
<comment type="tissue specificity">
    <text evidence="2">Medulla oblongata and hypothalamus.</text>
</comment>
<accession>P81277</accession>
<dbReference type="EMBL" id="AB015419">
    <property type="protein sequence ID" value="BAA29027.1"/>
    <property type="molecule type" value="mRNA"/>
</dbReference>
<dbReference type="EMBL" id="BC069081">
    <property type="protein sequence ID" value="AAH69081.1"/>
    <property type="molecule type" value="mRNA"/>
</dbReference>
<dbReference type="EMBL" id="BC069284">
    <property type="protein sequence ID" value="AAH69284.1"/>
    <property type="molecule type" value="mRNA"/>
</dbReference>
<dbReference type="CCDS" id="CCDS2519.1"/>
<dbReference type="RefSeq" id="NP_056977.1">
    <property type="nucleotide sequence ID" value="NM_015893.1"/>
</dbReference>
<dbReference type="PDB" id="8ZPS">
    <property type="method" value="EM"/>
    <property type="resolution" value="2.97 A"/>
    <property type="chains" value="L=34-53"/>
</dbReference>
<dbReference type="PDB" id="8ZPT">
    <property type="method" value="EM"/>
    <property type="resolution" value="2.96 A"/>
    <property type="chains" value="L=34-53"/>
</dbReference>
<dbReference type="PDB" id="9K26">
    <property type="method" value="EM"/>
    <property type="resolution" value="3.00 A"/>
    <property type="chains" value="F=23-53"/>
</dbReference>
<dbReference type="PDB" id="9K27">
    <property type="method" value="EM"/>
    <property type="resolution" value="2.68 A"/>
    <property type="chains" value="F=23-53"/>
</dbReference>
<dbReference type="PDBsum" id="8ZPS"/>
<dbReference type="PDBsum" id="8ZPT"/>
<dbReference type="PDBsum" id="9K26"/>
<dbReference type="PDBsum" id="9K27"/>
<dbReference type="EMDB" id="EMD-60353"/>
<dbReference type="EMDB" id="EMD-60354"/>
<dbReference type="EMDB" id="EMD-61991"/>
<dbReference type="EMDB" id="EMD-61992"/>
<dbReference type="SMR" id="P81277"/>
<dbReference type="FunCoup" id="P81277">
    <property type="interactions" value="472"/>
</dbReference>
<dbReference type="STRING" id="9606.ENSP00000165524"/>
<dbReference type="BindingDB" id="P81277"/>
<dbReference type="ChEMBL" id="CHEMBL4523266"/>
<dbReference type="iPTMnet" id="P81277"/>
<dbReference type="PhosphoSitePlus" id="P81277"/>
<dbReference type="BioMuta" id="PRLH"/>
<dbReference type="DMDM" id="8134649"/>
<dbReference type="PaxDb" id="9606-ENSP00000165524"/>
<dbReference type="Antibodypedia" id="2231">
    <property type="antibodies" value="51 antibodies from 14 providers"/>
</dbReference>
<dbReference type="DNASU" id="51052"/>
<dbReference type="Ensembl" id="ENST00000165524.1">
    <property type="protein sequence ID" value="ENSP00000165524.1"/>
    <property type="gene ID" value="ENSG00000071677.1"/>
</dbReference>
<dbReference type="GeneID" id="51052"/>
<dbReference type="KEGG" id="hsa:51052"/>
<dbReference type="MANE-Select" id="ENST00000165524.1">
    <property type="protein sequence ID" value="ENSP00000165524.1"/>
    <property type="RefSeq nucleotide sequence ID" value="NM_015893.1"/>
    <property type="RefSeq protein sequence ID" value="NP_056977.1"/>
</dbReference>
<dbReference type="AGR" id="HGNC:17945"/>
<dbReference type="CTD" id="51052"/>
<dbReference type="DisGeNET" id="51052"/>
<dbReference type="GeneCards" id="PRLH"/>
<dbReference type="HGNC" id="HGNC:17945">
    <property type="gene designation" value="PRLH"/>
</dbReference>
<dbReference type="HPA" id="ENSG00000071677">
    <property type="expression patterns" value="Group enriched (brain, heart muscle)"/>
</dbReference>
<dbReference type="MIM" id="602663">
    <property type="type" value="gene"/>
</dbReference>
<dbReference type="neXtProt" id="NX_P81277"/>
<dbReference type="OpenTargets" id="ENSG00000071677"/>
<dbReference type="PharmGKB" id="PA134927756"/>
<dbReference type="VEuPathDB" id="HostDB:ENSG00000071677"/>
<dbReference type="eggNOG" id="ENOG502S7XA">
    <property type="taxonomic scope" value="Eukaryota"/>
</dbReference>
<dbReference type="GeneTree" id="ENSGT00390000005489"/>
<dbReference type="HOGENOM" id="CLU_170457_0_0_1"/>
<dbReference type="InParanoid" id="P81277"/>
<dbReference type="OMA" id="RARQHSM"/>
<dbReference type="OrthoDB" id="8587277at2759"/>
<dbReference type="PAN-GO" id="P81277">
    <property type="GO annotations" value="5 GO annotations based on evolutionary models"/>
</dbReference>
<dbReference type="PhylomeDB" id="P81277"/>
<dbReference type="TreeFam" id="TF330717"/>
<dbReference type="PathwayCommons" id="P81277"/>
<dbReference type="Reactome" id="R-HSA-375276">
    <property type="pathway name" value="Peptide ligand-binding receptors"/>
</dbReference>
<dbReference type="SignaLink" id="P81277"/>
<dbReference type="BioGRID-ORCS" id="51052">
    <property type="hits" value="18 hits in 1140 CRISPR screens"/>
</dbReference>
<dbReference type="GeneWiki" id="PRLH"/>
<dbReference type="GeneWiki" id="Prolactin-releasing_peptide"/>
<dbReference type="GenomeRNAi" id="51052"/>
<dbReference type="Pharos" id="P81277">
    <property type="development level" value="Tdark"/>
</dbReference>
<dbReference type="PRO" id="PR:P81277"/>
<dbReference type="Proteomes" id="UP000005640">
    <property type="component" value="Chromosome 2"/>
</dbReference>
<dbReference type="RNAct" id="P81277">
    <property type="molecule type" value="protein"/>
</dbReference>
<dbReference type="Bgee" id="ENSG00000071677">
    <property type="expression patterns" value="Expressed in pancreatic ductal cell and 83 other cell types or tissues"/>
</dbReference>
<dbReference type="ExpressionAtlas" id="P81277">
    <property type="expression patterns" value="baseline and differential"/>
</dbReference>
<dbReference type="GO" id="GO:0005737">
    <property type="term" value="C:cytoplasm"/>
    <property type="evidence" value="ECO:0007669"/>
    <property type="project" value="Ensembl"/>
</dbReference>
<dbReference type="GO" id="GO:0005576">
    <property type="term" value="C:extracellular region"/>
    <property type="evidence" value="ECO:0000304"/>
    <property type="project" value="Reactome"/>
</dbReference>
<dbReference type="GO" id="GO:0005179">
    <property type="term" value="F:hormone activity"/>
    <property type="evidence" value="ECO:0000304"/>
    <property type="project" value="ProtInc"/>
</dbReference>
<dbReference type="GO" id="GO:0005184">
    <property type="term" value="F:neuropeptide hormone activity"/>
    <property type="evidence" value="ECO:0000318"/>
    <property type="project" value="GO_Central"/>
</dbReference>
<dbReference type="GO" id="GO:0031861">
    <property type="term" value="F:prolactin-releasing peptide receptor binding"/>
    <property type="evidence" value="ECO:0000318"/>
    <property type="project" value="GO_Central"/>
</dbReference>
<dbReference type="GO" id="GO:0048483">
    <property type="term" value="P:autonomic nervous system development"/>
    <property type="evidence" value="ECO:0007669"/>
    <property type="project" value="Ensembl"/>
</dbReference>
<dbReference type="GO" id="GO:0006112">
    <property type="term" value="P:energy reserve metabolic process"/>
    <property type="evidence" value="ECO:0007669"/>
    <property type="project" value="Ensembl"/>
</dbReference>
<dbReference type="GO" id="GO:0045444">
    <property type="term" value="P:fat cell differentiation"/>
    <property type="evidence" value="ECO:0007669"/>
    <property type="project" value="Ensembl"/>
</dbReference>
<dbReference type="GO" id="GO:0007631">
    <property type="term" value="P:feeding behavior"/>
    <property type="evidence" value="ECO:0000318"/>
    <property type="project" value="GO_Central"/>
</dbReference>
<dbReference type="GO" id="GO:0007186">
    <property type="term" value="P:G protein-coupled receptor signaling pathway"/>
    <property type="evidence" value="ECO:0000318"/>
    <property type="project" value="GO_Central"/>
</dbReference>
<dbReference type="GO" id="GO:0006629">
    <property type="term" value="P:lipid metabolic process"/>
    <property type="evidence" value="ECO:0007669"/>
    <property type="project" value="Ensembl"/>
</dbReference>
<dbReference type="GO" id="GO:0002023">
    <property type="term" value="P:reduction of food intake in response to dietary excess"/>
    <property type="evidence" value="ECO:0007669"/>
    <property type="project" value="Ensembl"/>
</dbReference>
<dbReference type="GO" id="GO:0040014">
    <property type="term" value="P:regulation of multicellular organism growth"/>
    <property type="evidence" value="ECO:0007669"/>
    <property type="project" value="Ensembl"/>
</dbReference>
<dbReference type="GO" id="GO:0009749">
    <property type="term" value="P:response to glucose"/>
    <property type="evidence" value="ECO:0007669"/>
    <property type="project" value="Ensembl"/>
</dbReference>
<dbReference type="GO" id="GO:0032868">
    <property type="term" value="P:response to insulin"/>
    <property type="evidence" value="ECO:0007669"/>
    <property type="project" value="Ensembl"/>
</dbReference>
<dbReference type="GO" id="GO:0043434">
    <property type="term" value="P:response to peptide hormone"/>
    <property type="evidence" value="ECO:0000318"/>
    <property type="project" value="GO_Central"/>
</dbReference>
<dbReference type="GO" id="GO:0001894">
    <property type="term" value="P:tissue homeostasis"/>
    <property type="evidence" value="ECO:0007669"/>
    <property type="project" value="Ensembl"/>
</dbReference>
<dbReference type="InterPro" id="IPR026194">
    <property type="entry name" value="PrRP"/>
</dbReference>
<dbReference type="PANTHER" id="PTHR17206">
    <property type="entry name" value="PROLACTIN-RELEASING PEPTIDE"/>
    <property type="match status" value="1"/>
</dbReference>
<dbReference type="PANTHER" id="PTHR17206:SF1">
    <property type="entry name" value="PROLACTIN-RELEASING PEPTIDE"/>
    <property type="match status" value="1"/>
</dbReference>
<dbReference type="Pfam" id="PF15172">
    <property type="entry name" value="Prolactin_RP"/>
    <property type="match status" value="1"/>
</dbReference>
<feature type="signal peptide" evidence="1">
    <location>
        <begin position="1"/>
        <end position="22"/>
    </location>
</feature>
<feature type="peptide" id="PRO_0000022144" description="Prolactin-releasing peptide PrRP31">
    <location>
        <begin position="23"/>
        <end position="53"/>
    </location>
</feature>
<feature type="peptide" id="PRO_0000022145" description="Prolactin-releasing peptide PrRP20">
    <location>
        <begin position="34"/>
        <end position="53"/>
    </location>
</feature>
<feature type="propeptide" id="PRO_0000022146">
    <location>
        <begin position="58"/>
        <end position="87"/>
    </location>
</feature>
<feature type="modified residue" description="Phenylalanine amide" evidence="1">
    <location>
        <position position="53"/>
    </location>
</feature>
<feature type="helix" evidence="3">
    <location>
        <begin position="38"/>
        <end position="43"/>
    </location>
</feature>
<organism>
    <name type="scientific">Homo sapiens</name>
    <name type="common">Human</name>
    <dbReference type="NCBI Taxonomy" id="9606"/>
    <lineage>
        <taxon>Eukaryota</taxon>
        <taxon>Metazoa</taxon>
        <taxon>Chordata</taxon>
        <taxon>Craniata</taxon>
        <taxon>Vertebrata</taxon>
        <taxon>Euteleostomi</taxon>
        <taxon>Mammalia</taxon>
        <taxon>Eutheria</taxon>
        <taxon>Euarchontoglires</taxon>
        <taxon>Primates</taxon>
        <taxon>Haplorrhini</taxon>
        <taxon>Catarrhini</taxon>
        <taxon>Hominidae</taxon>
        <taxon>Homo</taxon>
    </lineage>
</organism>
<protein>
    <recommendedName>
        <fullName>Prolactin-releasing peptide</fullName>
        <shortName>PrRP</shortName>
    </recommendedName>
    <alternativeName>
        <fullName>Prolactin-releasing hormone</fullName>
    </alternativeName>
    <component>
        <recommendedName>
            <fullName>Prolactin-releasing peptide PrRP31</fullName>
        </recommendedName>
    </component>
    <component>
        <recommendedName>
            <fullName>Prolactin-releasing peptide PrRP20</fullName>
        </recommendedName>
    </component>
</protein>
<evidence type="ECO:0000250" key="1"/>
<evidence type="ECO:0000269" key="2">
    <source>
    </source>
</evidence>
<evidence type="ECO:0007829" key="3">
    <source>
        <dbReference type="PDB" id="8ZPT"/>
    </source>
</evidence>
<reference key="1">
    <citation type="journal article" date="1998" name="Nature">
        <title>A prolactin-releasing peptide in the brain.</title>
        <authorList>
            <person name="Hinuma S."/>
            <person name="Habata Y."/>
            <person name="Fujii R."/>
            <person name="Kawamata Y."/>
            <person name="Hosoya M."/>
            <person name="Fukusumi S."/>
            <person name="Kitada C."/>
            <person name="Masuo Y."/>
            <person name="Asano T."/>
            <person name="Matsumoto H."/>
            <person name="Sekiguchi M."/>
            <person name="Kurokawa T."/>
            <person name="Nishimura O."/>
            <person name="Onda H."/>
            <person name="Fujino M."/>
        </authorList>
    </citation>
    <scope>NUCLEOTIDE SEQUENCE [MRNA]</scope>
    <source>
        <tissue>Brain</tissue>
    </source>
</reference>
<reference key="2">
    <citation type="journal article" date="2004" name="Genome Res.">
        <title>The status, quality, and expansion of the NIH full-length cDNA project: the Mammalian Gene Collection (MGC).</title>
        <authorList>
            <consortium name="The MGC Project Team"/>
        </authorList>
    </citation>
    <scope>NUCLEOTIDE SEQUENCE [LARGE SCALE MRNA]</scope>
</reference>
<reference key="3">
    <citation type="journal article" date="1999" name="Regul. Pept.">
        <title>Tissue distribution of prolactin-releasing peptide (PrRP) and its receptor.</title>
        <authorList>
            <person name="Fujii R."/>
            <person name="Fukusumi S."/>
            <person name="Hosoya M."/>
            <person name="Kawamata Y."/>
            <person name="Habata Y."/>
            <person name="Hinuma S."/>
            <person name="Sekiguchi M."/>
            <person name="Kitada C."/>
            <person name="Kurokawa T."/>
            <person name="Nishimura O."/>
            <person name="Onda H."/>
            <person name="Sumino Y."/>
            <person name="Fujino M."/>
        </authorList>
    </citation>
    <scope>TISSUE SPECIFICITY</scope>
</reference>
<gene>
    <name type="primary">PRLH</name>
    <name type="synonym">PRH</name>
</gene>
<keyword id="KW-0002">3D-structure</keyword>
<keyword id="KW-0027">Amidation</keyword>
<keyword id="KW-0165">Cleavage on pair of basic residues</keyword>
<keyword id="KW-0372">Hormone</keyword>
<keyword id="KW-1185">Reference proteome</keyword>
<keyword id="KW-0964">Secreted</keyword>
<keyword id="KW-0732">Signal</keyword>
<sequence>MKVLRAWLLCLLMLGLALRGAASRTHRHSMEIRTPDINPAWYASRGIRPVGRFGRRRATLGDVPKPGLRPRLTCFPLEGGAMSSQDG</sequence>